<organism>
    <name type="scientific">Rhizobium meliloti (strain 1021)</name>
    <name type="common">Ensifer meliloti</name>
    <name type="synonym">Sinorhizobium meliloti</name>
    <dbReference type="NCBI Taxonomy" id="266834"/>
    <lineage>
        <taxon>Bacteria</taxon>
        <taxon>Pseudomonadati</taxon>
        <taxon>Pseudomonadota</taxon>
        <taxon>Alphaproteobacteria</taxon>
        <taxon>Hyphomicrobiales</taxon>
        <taxon>Rhizobiaceae</taxon>
        <taxon>Sinorhizobium/Ensifer group</taxon>
        <taxon>Sinorhizobium</taxon>
    </lineage>
</organism>
<protein>
    <recommendedName>
        <fullName>Urease operon 23 kDa accessory protein</fullName>
    </recommendedName>
    <alternativeName>
        <fullName>ORF6</fullName>
    </alternativeName>
</protein>
<reference key="1">
    <citation type="journal article" date="1994" name="Mol. Gen. Genet.">
        <title>A 4.6 kb DNA region of Rhizobium meliloti involved in determining urease and hydrogenase activities carries the structural genes for urease (ureA, ureB, ureC) interrupted by other open reading frames.</title>
        <authorList>
            <person name="Miksch G."/>
            <person name="Arnold W."/>
            <person name="Lentzsch P."/>
            <person name="Priefer U.B."/>
            <person name="Puehler A."/>
        </authorList>
    </citation>
    <scope>NUCLEOTIDE SEQUENCE [GENOMIC DNA]</scope>
    <source>
        <strain>AK631</strain>
    </source>
</reference>
<reference key="2">
    <citation type="journal article" date="2001" name="Proc. Natl. Acad. Sci. U.S.A.">
        <title>Analysis of the chromosome sequence of the legume symbiont Sinorhizobium meliloti strain 1021.</title>
        <authorList>
            <person name="Capela D."/>
            <person name="Barloy-Hubler F."/>
            <person name="Gouzy J."/>
            <person name="Bothe G."/>
            <person name="Ampe F."/>
            <person name="Batut J."/>
            <person name="Boistard P."/>
            <person name="Becker A."/>
            <person name="Boutry M."/>
            <person name="Cadieu E."/>
            <person name="Dreano S."/>
            <person name="Gloux S."/>
            <person name="Godrie T."/>
            <person name="Goffeau A."/>
            <person name="Kahn D."/>
            <person name="Kiss E."/>
            <person name="Lelaure V."/>
            <person name="Masuy D."/>
            <person name="Pohl T."/>
            <person name="Portetelle D."/>
            <person name="Puehler A."/>
            <person name="Purnelle B."/>
            <person name="Ramsperger U."/>
            <person name="Renard C."/>
            <person name="Thebault P."/>
            <person name="Vandenbol M."/>
            <person name="Weidner S."/>
            <person name="Galibert F."/>
        </authorList>
    </citation>
    <scope>NUCLEOTIDE SEQUENCE [LARGE SCALE GENOMIC DNA]</scope>
    <source>
        <strain>1021</strain>
    </source>
</reference>
<reference key="3">
    <citation type="journal article" date="2001" name="Science">
        <title>The composite genome of the legume symbiont Sinorhizobium meliloti.</title>
        <authorList>
            <person name="Galibert F."/>
            <person name="Finan T.M."/>
            <person name="Long S.R."/>
            <person name="Puehler A."/>
            <person name="Abola P."/>
            <person name="Ampe F."/>
            <person name="Barloy-Hubler F."/>
            <person name="Barnett M.J."/>
            <person name="Becker A."/>
            <person name="Boistard P."/>
            <person name="Bothe G."/>
            <person name="Boutry M."/>
            <person name="Bowser L."/>
            <person name="Buhrmester J."/>
            <person name="Cadieu E."/>
            <person name="Capela D."/>
            <person name="Chain P."/>
            <person name="Cowie A."/>
            <person name="Davis R.W."/>
            <person name="Dreano S."/>
            <person name="Federspiel N.A."/>
            <person name="Fisher R.F."/>
            <person name="Gloux S."/>
            <person name="Godrie T."/>
            <person name="Goffeau A."/>
            <person name="Golding B."/>
            <person name="Gouzy J."/>
            <person name="Gurjal M."/>
            <person name="Hernandez-Lucas I."/>
            <person name="Hong A."/>
            <person name="Huizar L."/>
            <person name="Hyman R.W."/>
            <person name="Jones T."/>
            <person name="Kahn D."/>
            <person name="Kahn M.L."/>
            <person name="Kalman S."/>
            <person name="Keating D.H."/>
            <person name="Kiss E."/>
            <person name="Komp C."/>
            <person name="Lelaure V."/>
            <person name="Masuy D."/>
            <person name="Palm C."/>
            <person name="Peck M.C."/>
            <person name="Pohl T.M."/>
            <person name="Portetelle D."/>
            <person name="Purnelle B."/>
            <person name="Ramsperger U."/>
            <person name="Surzycki R."/>
            <person name="Thebault P."/>
            <person name="Vandenbol M."/>
            <person name="Vorhoelter F.J."/>
            <person name="Weidner S."/>
            <person name="Wells D.H."/>
            <person name="Wong K."/>
            <person name="Yeh K.-C."/>
            <person name="Batut J."/>
        </authorList>
    </citation>
    <scope>NUCLEOTIDE SEQUENCE [LARGE SCALE GENOMIC DNA]</scope>
    <source>
        <strain>1021</strain>
    </source>
</reference>
<evidence type="ECO:0000305" key="1"/>
<sequence length="216" mass="23035">MQSGRVIMIVGNGDVPEGAAATIDAADLVIRFNDCRSVGKGGSRTDIIAVCNTGRPALSMLGGGRWKTSAAVRQARELWSVRSGARFAAMRAALAGTHPDLDDFCDDYTAGFESFARATARKHRVIAAETHDRLERDLARFAPSPYVAPSSGLVVIADIVSSFAAAGDDVVLAGFGHIGWQWHPFAAERRYVDALAAQGRLRRLHPFASSDLPQGA</sequence>
<feature type="chain" id="PRO_0000067682" description="Urease operon 23 kDa accessory protein">
    <location>
        <begin position="1"/>
        <end position="216"/>
    </location>
</feature>
<name>UREY_RHIME</name>
<keyword id="KW-1185">Reference proteome</keyword>
<proteinExistence type="predicted"/>
<dbReference type="EMBL" id="S69145">
    <property type="protein sequence ID" value="AAB30139.1"/>
    <property type="status" value="ALT_FRAME"/>
    <property type="molecule type" value="Genomic_DNA"/>
</dbReference>
<dbReference type="EMBL" id="AL591688">
    <property type="protein sequence ID" value="CAC47050.1"/>
    <property type="molecule type" value="Genomic_DNA"/>
</dbReference>
<dbReference type="PIR" id="S42606">
    <property type="entry name" value="S42606"/>
</dbReference>
<dbReference type="RefSeq" id="NP_386577.1">
    <property type="nucleotide sequence ID" value="NC_003047.1"/>
</dbReference>
<dbReference type="RefSeq" id="WP_010969962.1">
    <property type="nucleotide sequence ID" value="NC_003047.1"/>
</dbReference>
<dbReference type="SMR" id="P42880"/>
<dbReference type="EnsemblBacteria" id="CAC47050">
    <property type="protein sequence ID" value="CAC47050"/>
    <property type="gene ID" value="SMc01838"/>
</dbReference>
<dbReference type="KEGG" id="sme:SMc01838"/>
<dbReference type="PATRIC" id="fig|266834.11.peg.3960"/>
<dbReference type="eggNOG" id="COG1442">
    <property type="taxonomic scope" value="Bacteria"/>
</dbReference>
<dbReference type="HOGENOM" id="CLU_1313254_0_0_5"/>
<dbReference type="OrthoDB" id="8451561at2"/>
<dbReference type="Proteomes" id="UP000001976">
    <property type="component" value="Chromosome"/>
</dbReference>
<dbReference type="Gene3D" id="3.90.1480.20">
    <property type="entry name" value="Glycosyl transferase family 29"/>
    <property type="match status" value="1"/>
</dbReference>
<dbReference type="InterPro" id="IPR038578">
    <property type="entry name" value="GT29-like_sf"/>
</dbReference>
<comment type="function">
    <text>Involved in the expression of hydrogenase activity. May be a regulatory gene affecting the expression of the hydrogenase operon or could be involved in the process of nickel incorporation into the hydrogenase apoenzyme.</text>
</comment>
<comment type="sequence caution" evidence="1">
    <conflict type="frameshift">
        <sequence resource="EMBL-CDS" id="AAB30139"/>
    </conflict>
</comment>
<accession>P42880</accession>
<gene>
    <name type="ordered locus">R02471</name>
    <name type="ORF">SMc01838</name>
</gene>